<name>CHI4_SOLTU</name>
<sequence>EFTALSLLFSLLLLTASAEQCGKQAGGARCAAGLCCSNFGWCGNTNDYCGPGKCQSQCPSGPSPKPPTPGPGPSGGDIGSVISNSMFDQMLKHRNDNACQGKNNFYSYNAFINAARSFGGFGTTGDTTARKREIAAFFAQTSHETTGGWPTAPDGPYAWGYCFLREQGSPGDYCTPSGQWPCAPGRKYFGRGPIQISHNYNYGPCGRAIGVDLLNNPDLVATDPVISFKSAIWFWMTPQSPKPSCHDVIIGRWQPSAADRAANRLPGFGVITNIINGGLECGRGSDSRVQDRIGFYRRYCGI</sequence>
<evidence type="ECO:0000250" key="1"/>
<evidence type="ECO:0000250" key="2">
    <source>
        <dbReference type="UniProtKB" id="P29022"/>
    </source>
</evidence>
<evidence type="ECO:0000255" key="3"/>
<evidence type="ECO:0000255" key="4">
    <source>
        <dbReference type="PROSITE-ProRule" id="PRU00261"/>
    </source>
</evidence>
<evidence type="ECO:0000256" key="5">
    <source>
        <dbReference type="SAM" id="MobiDB-lite"/>
    </source>
</evidence>
<evidence type="ECO:0000305" key="6"/>
<gene>
    <name type="primary">CHTB4</name>
</gene>
<organism>
    <name type="scientific">Solanum tuberosum</name>
    <name type="common">Potato</name>
    <dbReference type="NCBI Taxonomy" id="4113"/>
    <lineage>
        <taxon>Eukaryota</taxon>
        <taxon>Viridiplantae</taxon>
        <taxon>Streptophyta</taxon>
        <taxon>Embryophyta</taxon>
        <taxon>Tracheophyta</taxon>
        <taxon>Spermatophyta</taxon>
        <taxon>Magnoliopsida</taxon>
        <taxon>eudicotyledons</taxon>
        <taxon>Gunneridae</taxon>
        <taxon>Pentapetalae</taxon>
        <taxon>asterids</taxon>
        <taxon>lamiids</taxon>
        <taxon>Solanales</taxon>
        <taxon>Solanaceae</taxon>
        <taxon>Solanoideae</taxon>
        <taxon>Solaneae</taxon>
        <taxon>Solanum</taxon>
    </lineage>
</organism>
<accession>P52406</accession>
<proteinExistence type="evidence at transcript level"/>
<reference key="1">
    <citation type="journal article" date="1994" name="Plant Mol. Biol.">
        <title>Primary structure and expression of mRNAs encoding basic chitinase and 1,3-beta-glucanase in potato.</title>
        <authorList>
            <person name="Beerhues L."/>
            <person name="Kombrink E."/>
        </authorList>
    </citation>
    <scope>NUCLEOTIDE SEQUENCE [MRNA]</scope>
    <source>
        <strain>cv. Datura</strain>
        <tissue>Leaf</tissue>
    </source>
</reference>
<keyword id="KW-0119">Carbohydrate metabolism</keyword>
<keyword id="KW-0146">Chitin degradation</keyword>
<keyword id="KW-0147">Chitin-binding</keyword>
<keyword id="KW-1015">Disulfide bond</keyword>
<keyword id="KW-0326">Glycosidase</keyword>
<keyword id="KW-0378">Hydrolase</keyword>
<keyword id="KW-0611">Plant defense</keyword>
<keyword id="KW-0624">Polysaccharide degradation</keyword>
<keyword id="KW-1185">Reference proteome</keyword>
<keyword id="KW-0732">Signal</keyword>
<keyword id="KW-0926">Vacuole</keyword>
<protein>
    <recommendedName>
        <fullName>Endochitinase 4</fullName>
        <ecNumber>3.2.1.14</ecNumber>
    </recommendedName>
</protein>
<feature type="signal peptide" evidence="3">
    <location>
        <begin position="1" status="less than"/>
        <end position="18"/>
    </location>
</feature>
<feature type="chain" id="PRO_0000005326" description="Endochitinase 4">
    <location>
        <begin position="19"/>
        <end position="302" status="greater than"/>
    </location>
</feature>
<feature type="domain" description="Chitin-binding type-1" evidence="4">
    <location>
        <begin position="19"/>
        <end position="60"/>
    </location>
</feature>
<feature type="region of interest" description="Disordered" evidence="5">
    <location>
        <begin position="59"/>
        <end position="79"/>
    </location>
</feature>
<feature type="compositionally biased region" description="Pro residues" evidence="5">
    <location>
        <begin position="61"/>
        <end position="72"/>
    </location>
</feature>
<feature type="active site" description="Proton donor" evidence="2">
    <location>
        <position position="144"/>
    </location>
</feature>
<feature type="disulfide bond" evidence="4">
    <location>
        <begin position="21"/>
        <end position="36"/>
    </location>
</feature>
<feature type="disulfide bond" evidence="4">
    <location>
        <begin position="30"/>
        <end position="42"/>
    </location>
</feature>
<feature type="disulfide bond" evidence="4">
    <location>
        <begin position="35"/>
        <end position="49"/>
    </location>
</feature>
<feature type="disulfide bond" evidence="4">
    <location>
        <begin position="54"/>
        <end position="58"/>
    </location>
</feature>
<feature type="disulfide bond" evidence="4">
    <location>
        <begin position="162"/>
        <end position="182"/>
    </location>
</feature>
<feature type="non-terminal residue">
    <location>
        <position position="1"/>
    </location>
</feature>
<feature type="non-terminal residue">
    <location>
        <position position="302"/>
    </location>
</feature>
<dbReference type="EC" id="3.2.1.14"/>
<dbReference type="EMBL" id="U02608">
    <property type="protein sequence ID" value="AAA17410.1"/>
    <property type="molecule type" value="mRNA"/>
</dbReference>
<dbReference type="PIR" id="S65021">
    <property type="entry name" value="S65021"/>
</dbReference>
<dbReference type="SMR" id="P52406"/>
<dbReference type="FunCoup" id="P52406">
    <property type="interactions" value="211"/>
</dbReference>
<dbReference type="STRING" id="4113.P52406"/>
<dbReference type="CAZy" id="CBM18">
    <property type="family name" value="Carbohydrate-Binding Module Family 18"/>
</dbReference>
<dbReference type="CAZy" id="GH19">
    <property type="family name" value="Glycoside Hydrolase Family 19"/>
</dbReference>
<dbReference type="PaxDb" id="4113-PGSC0003DMT400069034"/>
<dbReference type="eggNOG" id="KOG4742">
    <property type="taxonomic scope" value="Eukaryota"/>
</dbReference>
<dbReference type="InParanoid" id="P52406"/>
<dbReference type="Proteomes" id="UP000011115">
    <property type="component" value="Unassembled WGS sequence"/>
</dbReference>
<dbReference type="ExpressionAtlas" id="P52406">
    <property type="expression patterns" value="baseline"/>
</dbReference>
<dbReference type="GO" id="GO:0005773">
    <property type="term" value="C:vacuole"/>
    <property type="evidence" value="ECO:0007669"/>
    <property type="project" value="UniProtKB-SubCell"/>
</dbReference>
<dbReference type="GO" id="GO:0008061">
    <property type="term" value="F:chitin binding"/>
    <property type="evidence" value="ECO:0007669"/>
    <property type="project" value="UniProtKB-KW"/>
</dbReference>
<dbReference type="GO" id="GO:0004568">
    <property type="term" value="F:chitinase activity"/>
    <property type="evidence" value="ECO:0000318"/>
    <property type="project" value="GO_Central"/>
</dbReference>
<dbReference type="GO" id="GO:0008843">
    <property type="term" value="F:endochitinase activity"/>
    <property type="evidence" value="ECO:0007669"/>
    <property type="project" value="UniProtKB-EC"/>
</dbReference>
<dbReference type="GO" id="GO:0016998">
    <property type="term" value="P:cell wall macromolecule catabolic process"/>
    <property type="evidence" value="ECO:0007669"/>
    <property type="project" value="InterPro"/>
</dbReference>
<dbReference type="GO" id="GO:0006032">
    <property type="term" value="P:chitin catabolic process"/>
    <property type="evidence" value="ECO:0007669"/>
    <property type="project" value="UniProtKB-KW"/>
</dbReference>
<dbReference type="GO" id="GO:0006952">
    <property type="term" value="P:defense response"/>
    <property type="evidence" value="ECO:0007669"/>
    <property type="project" value="UniProtKB-KW"/>
</dbReference>
<dbReference type="GO" id="GO:0000272">
    <property type="term" value="P:polysaccharide catabolic process"/>
    <property type="evidence" value="ECO:0007669"/>
    <property type="project" value="UniProtKB-KW"/>
</dbReference>
<dbReference type="CDD" id="cd00325">
    <property type="entry name" value="chitinase_GH19"/>
    <property type="match status" value="1"/>
</dbReference>
<dbReference type="CDD" id="cd06921">
    <property type="entry name" value="ChtBD1_GH19_hevein"/>
    <property type="match status" value="1"/>
</dbReference>
<dbReference type="FunFam" id="3.30.60.10:FF:000001">
    <property type="entry name" value="Basic endochitinase"/>
    <property type="match status" value="1"/>
</dbReference>
<dbReference type="FunFam" id="3.30.20.10:FF:000001">
    <property type="entry name" value="Endochitinase (Chitinase)"/>
    <property type="match status" value="1"/>
</dbReference>
<dbReference type="Gene3D" id="1.10.530.10">
    <property type="match status" value="1"/>
</dbReference>
<dbReference type="Gene3D" id="3.30.20.10">
    <property type="entry name" value="Endochitinase, domain 2"/>
    <property type="match status" value="1"/>
</dbReference>
<dbReference type="Gene3D" id="3.30.60.10">
    <property type="entry name" value="Endochitinase-like"/>
    <property type="match status" value="1"/>
</dbReference>
<dbReference type="InterPro" id="IPR001002">
    <property type="entry name" value="Chitin-bd_1"/>
</dbReference>
<dbReference type="InterPro" id="IPR018371">
    <property type="entry name" value="Chitin-binding_1_CS"/>
</dbReference>
<dbReference type="InterPro" id="IPR036861">
    <property type="entry name" value="Endochitinase-like_sf"/>
</dbReference>
<dbReference type="InterPro" id="IPR016283">
    <property type="entry name" value="Glyco_hydro_19"/>
</dbReference>
<dbReference type="InterPro" id="IPR000726">
    <property type="entry name" value="Glyco_hydro_19_cat"/>
</dbReference>
<dbReference type="InterPro" id="IPR023346">
    <property type="entry name" value="Lysozyme-like_dom_sf"/>
</dbReference>
<dbReference type="PANTHER" id="PTHR22595">
    <property type="entry name" value="CHITINASE-RELATED"/>
    <property type="match status" value="1"/>
</dbReference>
<dbReference type="PANTHER" id="PTHR22595:SF184">
    <property type="entry name" value="ENDOCHITINASE A"/>
    <property type="match status" value="1"/>
</dbReference>
<dbReference type="Pfam" id="PF00187">
    <property type="entry name" value="Chitin_bind_1"/>
    <property type="match status" value="1"/>
</dbReference>
<dbReference type="Pfam" id="PF00182">
    <property type="entry name" value="Glyco_hydro_19"/>
    <property type="match status" value="1"/>
</dbReference>
<dbReference type="PIRSF" id="PIRSF001060">
    <property type="entry name" value="Endochitinase"/>
    <property type="match status" value="1"/>
</dbReference>
<dbReference type="PRINTS" id="PR00451">
    <property type="entry name" value="CHITINBINDNG"/>
</dbReference>
<dbReference type="SMART" id="SM00270">
    <property type="entry name" value="ChtBD1"/>
    <property type="match status" value="1"/>
</dbReference>
<dbReference type="SUPFAM" id="SSF53955">
    <property type="entry name" value="Lysozyme-like"/>
    <property type="match status" value="1"/>
</dbReference>
<dbReference type="SUPFAM" id="SSF57016">
    <property type="entry name" value="Plant lectins/antimicrobial peptides"/>
    <property type="match status" value="1"/>
</dbReference>
<dbReference type="PROSITE" id="PS00026">
    <property type="entry name" value="CHIT_BIND_I_1"/>
    <property type="match status" value="1"/>
</dbReference>
<dbReference type="PROSITE" id="PS50941">
    <property type="entry name" value="CHIT_BIND_I_2"/>
    <property type="match status" value="1"/>
</dbReference>
<dbReference type="PROSITE" id="PS00773">
    <property type="entry name" value="CHITINASE_19_1"/>
    <property type="match status" value="1"/>
</dbReference>
<dbReference type="PROSITE" id="PS00774">
    <property type="entry name" value="CHITINASE_19_2"/>
    <property type="match status" value="1"/>
</dbReference>
<comment type="function">
    <text>Defense against chitin-containing fungal pathogens.</text>
</comment>
<comment type="catalytic activity">
    <reaction>
        <text>Random endo-hydrolysis of N-acetyl-beta-D-glucosaminide (1-&gt;4)-beta-linkages in chitin and chitodextrins.</text>
        <dbReference type="EC" id="3.2.1.14"/>
    </reaction>
</comment>
<comment type="subcellular location">
    <subcellularLocation>
        <location evidence="1">Vacuole</location>
    </subcellularLocation>
    <text evidence="1">Vacuolar and protoplast.</text>
</comment>
<comment type="developmental stage">
    <text>Highest levels in younger leaves or stems segments and in older ones. Leaves and stems of intermediate age show a decreased expression. Appreciable amounts are also found in old root segments, and carpels.</text>
</comment>
<comment type="induction">
    <text>In response to infection, elicitor, ethylene, wounding.</text>
</comment>
<comment type="similarity">
    <text evidence="6">Belongs to the glycosyl hydrolase 19 family. Chitinase class I subfamily.</text>
</comment>